<keyword id="KW-0007">Acetylation</keyword>
<keyword id="KW-0053">Apoptosis</keyword>
<keyword id="KW-0963">Cytoplasm</keyword>
<keyword id="KW-0378">Hydrolase</keyword>
<keyword id="KW-0547">Nucleotide-binding</keyword>
<keyword id="KW-0539">Nucleus</keyword>
<keyword id="KW-0597">Phosphoprotein</keyword>
<keyword id="KW-0645">Protease</keyword>
<keyword id="KW-1185">Reference proteome</keyword>
<keyword id="KW-0788">Thiol protease</keyword>
<keyword id="KW-0804">Transcription</keyword>
<keyword id="KW-0805">Transcription regulation</keyword>
<keyword id="KW-0833">Ubl conjugation pathway</keyword>
<reference key="1">
    <citation type="submission" date="2004-11" db="EMBL/GenBank/DDBJ databases">
        <authorList>
            <consortium name="The German cDNA consortium"/>
        </authorList>
    </citation>
    <scope>NUCLEOTIDE SEQUENCE [LARGE SCALE MRNA]</scope>
    <source>
        <tissue>Kidney</tissue>
    </source>
</reference>
<proteinExistence type="evidence at transcript level"/>
<evidence type="ECO:0000250" key="1">
    <source>
        <dbReference type="UniProtKB" id="P49773"/>
    </source>
</evidence>
<evidence type="ECO:0000250" key="2">
    <source>
        <dbReference type="UniProtKB" id="P62958"/>
    </source>
</evidence>
<evidence type="ECO:0000250" key="3">
    <source>
        <dbReference type="UniProtKB" id="P70349"/>
    </source>
</evidence>
<evidence type="ECO:0000255" key="4">
    <source>
        <dbReference type="PROSITE-ProRule" id="PRU00464"/>
    </source>
</evidence>
<evidence type="ECO:0000305" key="5"/>
<comment type="function">
    <text evidence="1 3">Exhibits adenosine 5'-monophosphoramidase activity, hydrolyzing purine nucleotide phosphoramidates with a single phosphate group such as adenosine 5'monophosphoramidate (AMP-NH2) to yield AMP and NH2 (By similarity). Hydrolyzes adenosine 5'monophosphomorpholidate (AMP-morpholidate) and guanosine 5'monophosphomorpholidate (GMP-morpholidate) (By similarity). Hydrolyzes lysyl-AMP (AMP-N-epsilon-(N-alpha-acetyl lysine methyl ester)) generated by lysine tRNA ligase, as well as Met-AMP, His-AMP and Asp-AMP, lysyl-GMP (GMP-N-epsilon-(N-alpha-acetyl lysine methyl ester)) and AMP-N-alanine methyl ester (By similarity). Can also convert adenosine 5'-O-phosphorothioate and guanosine 5'-O-phosphorothioate to the corresponding nucleoside 5'-O-phosphates with concomitant release of hydrogen sulfide (By similarity). In addition, functions as a scaffolding protein that modulates transcriptional activation by the LEF1/TCF1-CTNNB1 complex and by the complex formed with MITF and CTNNB1 (By similarity). Modulates p53/TP53 levels and p53/TP53-mediated apoptosis. Modulates proteasomal degradation of target proteins by the SCF (SKP2-CUL1-F-box protein) E3 ubiquitin-protein ligase complex (By similarity). Also exhibits SUMO-specific isopeptidase activity, deconjugating SUMO1 from RANGAP1 and RGS17 (By similarity).</text>
</comment>
<comment type="catalytic activity">
    <reaction evidence="1">
        <text>adenosine 5'-phosphoramidate + H2O = AMP + NH4(+)</text>
        <dbReference type="Rhea" id="RHEA:67916"/>
        <dbReference type="ChEBI" id="CHEBI:15377"/>
        <dbReference type="ChEBI" id="CHEBI:28938"/>
        <dbReference type="ChEBI" id="CHEBI:57890"/>
        <dbReference type="ChEBI" id="CHEBI:456215"/>
    </reaction>
</comment>
<comment type="subunit">
    <text evidence="1 3">Homodimer (By similarity). Interacts with CDK7 (By similarity). Interacts with RUVBL1 and RUVBL2 and is associated with the LEF1/TCF1-CTNNB1 complex and with a KAT5 histone acetyltransferase complex (By similarity). Identified in a complex with MITF and CTNNB1 (By similarity). Interacts with CDC34 and RBX1, and is part of a SCF (SKP2-CUL1-F-box protein) E3 ubiquitin-protein ligase complex (By similarity). Interacts with SUMO1, SUMO2 and RGS17 (By similarity). Interacts with the Ten-1 ICD form of TENM1 (By similarity). Interacts with CALM1; interaction increases in the presence of calcium ions (By similarity).</text>
</comment>
<comment type="subcellular location">
    <subcellularLocation>
        <location evidence="1">Cytoplasm</location>
    </subcellularLocation>
    <subcellularLocation>
        <location evidence="1">Nucleus</location>
    </subcellularLocation>
</comment>
<comment type="similarity">
    <text evidence="5">Belongs to the HINT family.</text>
</comment>
<name>HINT1_PONAB</name>
<sequence length="126" mass="13801">MADEIAKAQVARPGGDTIFGKIIRKEIPAKIIFEDDRCLAFHDISPQAPTHFLVIPKKHISQISVAEDDNESLLGHLMIVGKKCAADLGLNKGYRMVVNEGSDGGQSVYHVHLHVLGGRQMHWPPG</sequence>
<feature type="initiator methionine" description="Removed" evidence="2">
    <location>
        <position position="1"/>
    </location>
</feature>
<feature type="chain" id="PRO_0000253718" description="Adenosine 5'-monophosphoramidase HINT1">
    <location>
        <begin position="2"/>
        <end position="126"/>
    </location>
</feature>
<feature type="domain" description="HIT" evidence="4">
    <location>
        <begin position="18"/>
        <end position="126"/>
    </location>
</feature>
<feature type="short sequence motif" description="Histidine triad motif">
    <location>
        <begin position="110"/>
        <end position="114"/>
    </location>
</feature>
<feature type="active site" description="Tele-AMP-histidine intermediate" evidence="1">
    <location>
        <position position="112"/>
    </location>
</feature>
<feature type="binding site" evidence="1">
    <location>
        <begin position="43"/>
        <end position="44"/>
    </location>
    <ligand>
        <name>AMP</name>
        <dbReference type="ChEBI" id="CHEBI:456215"/>
    </ligand>
</feature>
<feature type="binding site" evidence="1">
    <location>
        <position position="99"/>
    </location>
    <ligand>
        <name>AMP</name>
        <dbReference type="ChEBI" id="CHEBI:456215"/>
    </ligand>
</feature>
<feature type="binding site" evidence="1">
    <location>
        <begin position="105"/>
        <end position="107"/>
    </location>
    <ligand>
        <name>AMP</name>
        <dbReference type="ChEBI" id="CHEBI:456215"/>
    </ligand>
</feature>
<feature type="binding site" evidence="1">
    <location>
        <begin position="112"/>
        <end position="114"/>
    </location>
    <ligand>
        <name>AMP</name>
        <dbReference type="ChEBI" id="CHEBI:456215"/>
    </ligand>
</feature>
<feature type="modified residue" description="N-acetylalanine" evidence="2">
    <location>
        <position position="2"/>
    </location>
</feature>
<feature type="modified residue" description="N6-acetyllysine" evidence="1">
    <location>
        <position position="21"/>
    </location>
</feature>
<feature type="modified residue" description="N6-acetyllysine" evidence="1">
    <location>
        <position position="30"/>
    </location>
</feature>
<feature type="modified residue" description="Phosphoserine" evidence="3">
    <location>
        <position position="45"/>
    </location>
</feature>
<feature type="modified residue" description="Phosphoserine" evidence="3">
    <location>
        <position position="72"/>
    </location>
</feature>
<protein>
    <recommendedName>
        <fullName evidence="1">Adenosine 5'-monophosphoramidase HINT1</fullName>
        <ecNumber evidence="1">3.9.1.-</ecNumber>
    </recommendedName>
    <alternativeName>
        <fullName evidence="1">Desumoylating isopeptidase HINT1</fullName>
        <ecNumber evidence="1">3.4.22.-</ecNumber>
    </alternativeName>
    <alternativeName>
        <fullName>Histidine triad nucleotide-binding protein 1</fullName>
    </alternativeName>
</protein>
<gene>
    <name type="primary">HINT1</name>
</gene>
<dbReference type="EC" id="3.9.1.-" evidence="1"/>
<dbReference type="EC" id="3.4.22.-" evidence="1"/>
<dbReference type="EMBL" id="CR857292">
    <property type="protein sequence ID" value="CAH89588.1"/>
    <property type="molecule type" value="mRNA"/>
</dbReference>
<dbReference type="RefSeq" id="NP_001124701.1">
    <property type="nucleotide sequence ID" value="NM_001131229.1"/>
</dbReference>
<dbReference type="SMR" id="Q5RF69"/>
<dbReference type="FunCoup" id="Q5RF69">
    <property type="interactions" value="1473"/>
</dbReference>
<dbReference type="STRING" id="9601.ENSPPYP00000017608"/>
<dbReference type="GeneID" id="100171549"/>
<dbReference type="KEGG" id="pon:100171549"/>
<dbReference type="CTD" id="3094"/>
<dbReference type="eggNOG" id="KOG3275">
    <property type="taxonomic scope" value="Eukaryota"/>
</dbReference>
<dbReference type="InParanoid" id="Q5RF69"/>
<dbReference type="OrthoDB" id="672793at2759"/>
<dbReference type="Proteomes" id="UP000001595">
    <property type="component" value="Unplaced"/>
</dbReference>
<dbReference type="GO" id="GO:0005737">
    <property type="term" value="C:cytoplasm"/>
    <property type="evidence" value="ECO:0000250"/>
    <property type="project" value="UniProtKB"/>
</dbReference>
<dbReference type="GO" id="GO:0000118">
    <property type="term" value="C:histone deacetylase complex"/>
    <property type="evidence" value="ECO:0000250"/>
    <property type="project" value="UniProtKB"/>
</dbReference>
<dbReference type="GO" id="GO:0005634">
    <property type="term" value="C:nucleus"/>
    <property type="evidence" value="ECO:0000250"/>
    <property type="project" value="UniProtKB"/>
</dbReference>
<dbReference type="GO" id="GO:0043530">
    <property type="term" value="F:adenosine 5'-monophosphoramidase activity"/>
    <property type="evidence" value="ECO:0000250"/>
    <property type="project" value="UniProtKB"/>
</dbReference>
<dbReference type="GO" id="GO:0016929">
    <property type="term" value="F:deSUMOylase activity"/>
    <property type="evidence" value="ECO:0000250"/>
    <property type="project" value="UniProtKB"/>
</dbReference>
<dbReference type="GO" id="GO:0016787">
    <property type="term" value="F:hydrolase activity"/>
    <property type="evidence" value="ECO:0000250"/>
    <property type="project" value="UniProtKB"/>
</dbReference>
<dbReference type="GO" id="GO:0000166">
    <property type="term" value="F:nucleotide binding"/>
    <property type="evidence" value="ECO:0007669"/>
    <property type="project" value="UniProtKB-KW"/>
</dbReference>
<dbReference type="GO" id="GO:0072332">
    <property type="term" value="P:intrinsic apoptotic signaling pathway by p53 class mediator"/>
    <property type="evidence" value="ECO:0000250"/>
    <property type="project" value="UniProtKB"/>
</dbReference>
<dbReference type="GO" id="GO:0016926">
    <property type="term" value="P:protein desumoylation"/>
    <property type="evidence" value="ECO:0000250"/>
    <property type="project" value="UniProtKB"/>
</dbReference>
<dbReference type="GO" id="GO:0006508">
    <property type="term" value="P:proteolysis"/>
    <property type="evidence" value="ECO:0007669"/>
    <property type="project" value="UniProtKB-KW"/>
</dbReference>
<dbReference type="GO" id="GO:0009154">
    <property type="term" value="P:purine ribonucleotide catabolic process"/>
    <property type="evidence" value="ECO:0000250"/>
    <property type="project" value="UniProtKB"/>
</dbReference>
<dbReference type="GO" id="GO:0006355">
    <property type="term" value="P:regulation of DNA-templated transcription"/>
    <property type="evidence" value="ECO:0000250"/>
    <property type="project" value="UniProtKB"/>
</dbReference>
<dbReference type="CDD" id="cd01276">
    <property type="entry name" value="PKCI_related"/>
    <property type="match status" value="1"/>
</dbReference>
<dbReference type="FunFam" id="3.30.428.10:FF:000005">
    <property type="entry name" value="Histidine triad nucleotide-binding protein 1"/>
    <property type="match status" value="1"/>
</dbReference>
<dbReference type="Gene3D" id="3.30.428.10">
    <property type="entry name" value="HIT-like"/>
    <property type="match status" value="1"/>
</dbReference>
<dbReference type="InterPro" id="IPR019808">
    <property type="entry name" value="Histidine_triad_CS"/>
</dbReference>
<dbReference type="InterPro" id="IPR001310">
    <property type="entry name" value="Histidine_triad_HIT"/>
</dbReference>
<dbReference type="InterPro" id="IPR011146">
    <property type="entry name" value="HIT-like"/>
</dbReference>
<dbReference type="InterPro" id="IPR036265">
    <property type="entry name" value="HIT-like_sf"/>
</dbReference>
<dbReference type="PANTHER" id="PTHR23089">
    <property type="entry name" value="HISTIDINE TRIAD HIT PROTEIN"/>
    <property type="match status" value="1"/>
</dbReference>
<dbReference type="Pfam" id="PF01230">
    <property type="entry name" value="HIT"/>
    <property type="match status" value="1"/>
</dbReference>
<dbReference type="PRINTS" id="PR00332">
    <property type="entry name" value="HISTRIAD"/>
</dbReference>
<dbReference type="SUPFAM" id="SSF54197">
    <property type="entry name" value="HIT-like"/>
    <property type="match status" value="1"/>
</dbReference>
<dbReference type="PROSITE" id="PS00892">
    <property type="entry name" value="HIT_1"/>
    <property type="match status" value="1"/>
</dbReference>
<dbReference type="PROSITE" id="PS51084">
    <property type="entry name" value="HIT_2"/>
    <property type="match status" value="1"/>
</dbReference>
<accession>Q5RF69</accession>
<organism>
    <name type="scientific">Pongo abelii</name>
    <name type="common">Sumatran orangutan</name>
    <name type="synonym">Pongo pygmaeus abelii</name>
    <dbReference type="NCBI Taxonomy" id="9601"/>
    <lineage>
        <taxon>Eukaryota</taxon>
        <taxon>Metazoa</taxon>
        <taxon>Chordata</taxon>
        <taxon>Craniata</taxon>
        <taxon>Vertebrata</taxon>
        <taxon>Euteleostomi</taxon>
        <taxon>Mammalia</taxon>
        <taxon>Eutheria</taxon>
        <taxon>Euarchontoglires</taxon>
        <taxon>Primates</taxon>
        <taxon>Haplorrhini</taxon>
        <taxon>Catarrhini</taxon>
        <taxon>Hominidae</taxon>
        <taxon>Pongo</taxon>
    </lineage>
</organism>